<organism>
    <name type="scientific">Nitrospira moscoviensis</name>
    <dbReference type="NCBI Taxonomy" id="42253"/>
    <lineage>
        <taxon>Bacteria</taxon>
        <taxon>Pseudomonadati</taxon>
        <taxon>Nitrospirota</taxon>
        <taxon>Nitrospiria</taxon>
        <taxon>Nitrospirales</taxon>
        <taxon>Nitrospiraceae</taxon>
        <taxon>Nitrospira</taxon>
    </lineage>
</organism>
<feature type="chain" id="PRO_0000441763" description="Prokaryotic ubiquitin-like protein UBact">
    <location>
        <begin position="1"/>
        <end position="66"/>
    </location>
</feature>
<feature type="region of interest" description="Disordered" evidence="2">
    <location>
        <begin position="1"/>
        <end position="66"/>
    </location>
</feature>
<feature type="compositionally biased region" description="Basic and acidic residues" evidence="2">
    <location>
        <begin position="30"/>
        <end position="66"/>
    </location>
</feature>
<feature type="cross-link" description="Isoglutamyl lysine isopeptide (Glu-Lys) (interchain with K-? in acceptor proteins)" evidence="4">
    <location>
        <position position="66"/>
    </location>
</feature>
<keyword id="KW-1017">Isopeptide bond</keyword>
<keyword id="KW-1185">Reference proteome</keyword>
<keyword id="KW-0833">Ubl conjugation pathway</keyword>
<comment type="function">
    <text evidence="5">May function as a protein modifier covalently attached to lysine residues of substrate proteins. This may serve to target the modified proteins for degradation by proteasomes.</text>
</comment>
<comment type="similarity">
    <text evidence="1">Belongs to the ubiquitin-like protein UBact family.</text>
</comment>
<protein>
    <recommendedName>
        <fullName evidence="3">Prokaryotic ubiquitin-like protein UBact</fullName>
    </recommendedName>
</protein>
<proteinExistence type="inferred from homology"/>
<reference key="1">
    <citation type="journal article" date="2015" name="Proc. Natl. Acad. Sci. U.S.A.">
        <title>Expanded metabolic versatility of ubiquitous nitrite-oxidizing bacteria from the genus Nitrospira.</title>
        <authorList>
            <person name="Koch H."/>
            <person name="Lucker S."/>
            <person name="Albertsen M."/>
            <person name="Kitzinger K."/>
            <person name="Herbold C."/>
            <person name="Spieck E."/>
            <person name="Nielsen P.H."/>
            <person name="Wagner M."/>
            <person name="Daims H."/>
        </authorList>
    </citation>
    <scope>NUCLEOTIDE SEQUENCE [LARGE SCALE GENOMIC DNA]</scope>
    <source>
        <strain>NSP M-1</strain>
    </source>
</reference>
<reference key="2">
    <citation type="journal article" date="2017" name="Biochem. Biophys. Res. Commun.">
        <title>Identification of UBact, a ubiquitin-like protein, along with other homologous components of a conjugation system and the proteasome in different gram-negative bacteria.</title>
        <authorList>
            <person name="Lehmann G."/>
            <person name="Udasin R.G."/>
            <person name="Livneh I."/>
            <person name="Ciechanover A."/>
        </authorList>
    </citation>
    <scope>PREDICTED FUNCTION</scope>
    <source>
        <strain>NSP M-1</strain>
    </source>
</reference>
<gene>
    <name evidence="3" type="primary">ubact</name>
    <name evidence="6" type="ORF">NITMOv2_0802</name>
</gene>
<dbReference type="EMBL" id="CP011801">
    <property type="protein sequence ID" value="ALA57237.1"/>
    <property type="molecule type" value="Genomic_DNA"/>
</dbReference>
<dbReference type="SMR" id="A0A0K2G9F6"/>
<dbReference type="STRING" id="42253.NITMOv2_0802"/>
<dbReference type="KEGG" id="nmv:NITMOv2_0802"/>
<dbReference type="PATRIC" id="fig|42253.5.peg.787"/>
<dbReference type="Proteomes" id="UP000069205">
    <property type="component" value="Chromosome"/>
</dbReference>
<dbReference type="GO" id="GO:0031386">
    <property type="term" value="F:protein tag activity"/>
    <property type="evidence" value="ECO:0007669"/>
    <property type="project" value="UniProtKB-UniRule"/>
</dbReference>
<dbReference type="HAMAP" id="MF_02133">
    <property type="entry name" value="UBact"/>
    <property type="match status" value="1"/>
</dbReference>
<dbReference type="InterPro" id="IPR037543">
    <property type="entry name" value="UBact"/>
</dbReference>
<dbReference type="NCBIfam" id="NF033388">
    <property type="entry name" value="ubiq_like_UBact"/>
    <property type="match status" value="1"/>
</dbReference>
<dbReference type="Pfam" id="PF20513">
    <property type="entry name" value="UBact"/>
    <property type="match status" value="1"/>
</dbReference>
<accession>A0A0K2G9F6</accession>
<sequence>MNMRYTLMPERREGPVDPMPQSPSPSDEGGGPRRPETGSPDKDNLLKRMRKVDPKQAERYRQRTGE</sequence>
<evidence type="ECO:0000255" key="1">
    <source>
        <dbReference type="HAMAP-Rule" id="MF_02133"/>
    </source>
</evidence>
<evidence type="ECO:0000256" key="2">
    <source>
        <dbReference type="SAM" id="MobiDB-lite"/>
    </source>
</evidence>
<evidence type="ECO:0000303" key="3">
    <source>
    </source>
</evidence>
<evidence type="ECO:0000305" key="4"/>
<evidence type="ECO:0000305" key="5">
    <source>
    </source>
</evidence>
<evidence type="ECO:0000312" key="6">
    <source>
        <dbReference type="EMBL" id="ALA57237.1"/>
    </source>
</evidence>
<name>UBACT_NITMO</name>